<feature type="chain" id="PRO_0000060785" description="Cytochrome b">
    <location>
        <begin position="1"/>
        <end position="379"/>
    </location>
</feature>
<feature type="transmembrane region" description="Helical" evidence="2">
    <location>
        <begin position="33"/>
        <end position="53"/>
    </location>
</feature>
<feature type="transmembrane region" description="Helical" evidence="2">
    <location>
        <begin position="77"/>
        <end position="98"/>
    </location>
</feature>
<feature type="transmembrane region" description="Helical" evidence="2">
    <location>
        <begin position="113"/>
        <end position="133"/>
    </location>
</feature>
<feature type="transmembrane region" description="Helical" evidence="2">
    <location>
        <begin position="178"/>
        <end position="198"/>
    </location>
</feature>
<feature type="transmembrane region" description="Helical" evidence="2">
    <location>
        <begin position="226"/>
        <end position="246"/>
    </location>
</feature>
<feature type="transmembrane region" description="Helical" evidence="2">
    <location>
        <begin position="288"/>
        <end position="308"/>
    </location>
</feature>
<feature type="transmembrane region" description="Helical" evidence="2">
    <location>
        <begin position="320"/>
        <end position="340"/>
    </location>
</feature>
<feature type="transmembrane region" description="Helical" evidence="2">
    <location>
        <begin position="347"/>
        <end position="367"/>
    </location>
</feature>
<feature type="binding site" description="axial binding residue" evidence="2">
    <location>
        <position position="83"/>
    </location>
    <ligand>
        <name>heme b</name>
        <dbReference type="ChEBI" id="CHEBI:60344"/>
        <label>b562</label>
    </ligand>
    <ligandPart>
        <name>Fe</name>
        <dbReference type="ChEBI" id="CHEBI:18248"/>
    </ligandPart>
</feature>
<feature type="binding site" description="axial binding residue" evidence="2">
    <location>
        <position position="97"/>
    </location>
    <ligand>
        <name>heme b</name>
        <dbReference type="ChEBI" id="CHEBI:60344"/>
        <label>b566</label>
    </ligand>
    <ligandPart>
        <name>Fe</name>
        <dbReference type="ChEBI" id="CHEBI:18248"/>
    </ligandPart>
</feature>
<feature type="binding site" description="axial binding residue" evidence="2">
    <location>
        <position position="182"/>
    </location>
    <ligand>
        <name>heme b</name>
        <dbReference type="ChEBI" id="CHEBI:60344"/>
        <label>b562</label>
    </ligand>
    <ligandPart>
        <name>Fe</name>
        <dbReference type="ChEBI" id="CHEBI:18248"/>
    </ligandPart>
</feature>
<feature type="binding site" description="axial binding residue" evidence="2">
    <location>
        <position position="196"/>
    </location>
    <ligand>
        <name>heme b</name>
        <dbReference type="ChEBI" id="CHEBI:60344"/>
        <label>b566</label>
    </ligand>
    <ligandPart>
        <name>Fe</name>
        <dbReference type="ChEBI" id="CHEBI:18248"/>
    </ligandPart>
</feature>
<feature type="binding site" evidence="2">
    <location>
        <position position="201"/>
    </location>
    <ligand>
        <name>a ubiquinone</name>
        <dbReference type="ChEBI" id="CHEBI:16389"/>
    </ligand>
</feature>
<keyword id="KW-0249">Electron transport</keyword>
<keyword id="KW-0349">Heme</keyword>
<keyword id="KW-0408">Iron</keyword>
<keyword id="KW-0472">Membrane</keyword>
<keyword id="KW-0479">Metal-binding</keyword>
<keyword id="KW-0496">Mitochondrion</keyword>
<keyword id="KW-0999">Mitochondrion inner membrane</keyword>
<keyword id="KW-1185">Reference proteome</keyword>
<keyword id="KW-0679">Respiratory chain</keyword>
<keyword id="KW-0812">Transmembrane</keyword>
<keyword id="KW-1133">Transmembrane helix</keyword>
<keyword id="KW-0813">Transport</keyword>
<keyword id="KW-0830">Ubiquinone</keyword>
<geneLocation type="mitochondrion"/>
<comment type="function">
    <text evidence="2">Component of the ubiquinol-cytochrome c reductase complex (complex III or cytochrome b-c1 complex) that is part of the mitochondrial respiratory chain. The b-c1 complex mediates electron transfer from ubiquinol to cytochrome c. Contributes to the generation of a proton gradient across the mitochondrial membrane that is then used for ATP synthesis.</text>
</comment>
<comment type="cofactor">
    <cofactor evidence="2">
        <name>heme b</name>
        <dbReference type="ChEBI" id="CHEBI:60344"/>
    </cofactor>
    <text evidence="2">Binds 2 heme b groups non-covalently.</text>
</comment>
<comment type="subunit">
    <text evidence="2">The cytochrome bc1 complex contains 11 subunits: 3 respiratory subunits (MT-CYB, CYC1 and UQCRFS1), 2 core proteins (UQCRC1 and UQCRC2) and 6 low-molecular weight proteins (UQCRH/QCR6, UQCRB/QCR7, UQCRQ/QCR8, UQCR10/QCR9, UQCR11/QCR10 and a cleavage product of UQCRFS1). This cytochrome bc1 complex then forms a dimer.</text>
</comment>
<comment type="subcellular location">
    <subcellularLocation>
        <location evidence="2">Mitochondrion inner membrane</location>
        <topology evidence="2">Multi-pass membrane protein</topology>
    </subcellularLocation>
</comment>
<comment type="miscellaneous">
    <text evidence="1">Heme 1 (or BL or b562) is low-potential and absorbs at about 562 nm, and heme 2 (or BH or b566) is high-potential and absorbs at about 566 nm.</text>
</comment>
<comment type="similarity">
    <text evidence="3 4">Belongs to the cytochrome b family.</text>
</comment>
<comment type="caution">
    <text evidence="2">The full-length protein contains only eight transmembrane helices, not nine as predicted by bioinformatics tools.</text>
</comment>
<accession>Q7Y8I2</accession>
<reference key="1">
    <citation type="journal article" date="2003" name="Mol. Phylogenet. Evol.">
        <title>Afrotherian phylogeny as inferred from complete mitochondrial genomes.</title>
        <authorList>
            <person name="Murata Y."/>
            <person name="Nikaido M."/>
            <person name="Sasaki T."/>
            <person name="Cao Y."/>
            <person name="Fukumoto Y."/>
            <person name="Hasegawa M."/>
            <person name="Okada N."/>
        </authorList>
    </citation>
    <scope>NUCLEOTIDE SEQUENCE [GENOMIC DNA]</scope>
</reference>
<sequence>MTNIRKTHPLLKIINHSFIDLPAPSNISAWWNFGSLLGLCLIIQILTGLFLAMHYTSDTSTAFSSVTHICRDVNNGWLIRYLHANGASMFFICLFTHVGRGIYYGSYLFLETWNIGIILLFAVMATAFMGYVLPWGQMSFWGATVITNLLSAIPYIGTTLVEWIWGGFSVDKATLTRFFAFHFILPFIVAALTMVHLLFLHETGSNNPSGLNSDADKIPFHPYYTVKDLLGVLMLLLFLLLLTLFSPDLLGDPDNYIPANPLNTPPHIKPEWYFLFAYAILRSIPNKLGGVLALVFSILILAAFPLLHMSHQRSLMFRPLSQCMFWILVADLFTLTWIGGQPVEHPFIIIGQLASILYFTIILVLMPVSSMIENRLLKW</sequence>
<protein>
    <recommendedName>
        <fullName>Cytochrome b</fullName>
    </recommendedName>
    <alternativeName>
        <fullName>Complex III subunit 3</fullName>
    </alternativeName>
    <alternativeName>
        <fullName>Complex III subunit III</fullName>
    </alternativeName>
    <alternativeName>
        <fullName>Cytochrome b-c1 complex subunit 3</fullName>
    </alternativeName>
    <alternativeName>
        <fullName>Ubiquinol-cytochrome-c reductase complex cytochrome b subunit</fullName>
    </alternativeName>
</protein>
<proteinExistence type="inferred from homology"/>
<organism>
    <name type="scientific">Chrysochloris asiatica</name>
    <name type="common">Cape golden mole</name>
    <dbReference type="NCBI Taxonomy" id="185453"/>
    <lineage>
        <taxon>Eukaryota</taxon>
        <taxon>Metazoa</taxon>
        <taxon>Chordata</taxon>
        <taxon>Craniata</taxon>
        <taxon>Vertebrata</taxon>
        <taxon>Euteleostomi</taxon>
        <taxon>Mammalia</taxon>
        <taxon>Eutheria</taxon>
        <taxon>Afrotheria</taxon>
        <taxon>Chrysochloridae</taxon>
        <taxon>Chrysochlorinae</taxon>
        <taxon>Chrysochloris</taxon>
    </lineage>
</organism>
<evidence type="ECO:0000250" key="1"/>
<evidence type="ECO:0000250" key="2">
    <source>
        <dbReference type="UniProtKB" id="P00157"/>
    </source>
</evidence>
<evidence type="ECO:0000255" key="3">
    <source>
        <dbReference type="PROSITE-ProRule" id="PRU00967"/>
    </source>
</evidence>
<evidence type="ECO:0000255" key="4">
    <source>
        <dbReference type="PROSITE-ProRule" id="PRU00968"/>
    </source>
</evidence>
<name>CYB_CHRAS</name>
<dbReference type="EMBL" id="AB096866">
    <property type="protein sequence ID" value="BAC78424.1"/>
    <property type="molecule type" value="Genomic_DNA"/>
</dbReference>
<dbReference type="RefSeq" id="NP_861501.1">
    <property type="nucleotide sequence ID" value="NC_004920.1"/>
</dbReference>
<dbReference type="SMR" id="Q7Y8I2"/>
<dbReference type="GeneID" id="1467809"/>
<dbReference type="CTD" id="4519"/>
<dbReference type="OrthoDB" id="244at2759"/>
<dbReference type="Proteomes" id="UP000504623">
    <property type="component" value="Mitochondrion MT"/>
</dbReference>
<dbReference type="GO" id="GO:0005743">
    <property type="term" value="C:mitochondrial inner membrane"/>
    <property type="evidence" value="ECO:0007669"/>
    <property type="project" value="UniProtKB-SubCell"/>
</dbReference>
<dbReference type="GO" id="GO:0045275">
    <property type="term" value="C:respiratory chain complex III"/>
    <property type="evidence" value="ECO:0007669"/>
    <property type="project" value="InterPro"/>
</dbReference>
<dbReference type="GO" id="GO:0046872">
    <property type="term" value="F:metal ion binding"/>
    <property type="evidence" value="ECO:0007669"/>
    <property type="project" value="UniProtKB-KW"/>
</dbReference>
<dbReference type="GO" id="GO:0008121">
    <property type="term" value="F:ubiquinol-cytochrome-c reductase activity"/>
    <property type="evidence" value="ECO:0007669"/>
    <property type="project" value="InterPro"/>
</dbReference>
<dbReference type="GO" id="GO:0006122">
    <property type="term" value="P:mitochondrial electron transport, ubiquinol to cytochrome c"/>
    <property type="evidence" value="ECO:0007669"/>
    <property type="project" value="TreeGrafter"/>
</dbReference>
<dbReference type="CDD" id="cd00290">
    <property type="entry name" value="cytochrome_b_C"/>
    <property type="match status" value="1"/>
</dbReference>
<dbReference type="CDD" id="cd00284">
    <property type="entry name" value="Cytochrome_b_N"/>
    <property type="match status" value="1"/>
</dbReference>
<dbReference type="FunFam" id="1.20.810.10:FF:000002">
    <property type="entry name" value="Cytochrome b"/>
    <property type="match status" value="1"/>
</dbReference>
<dbReference type="Gene3D" id="1.20.810.10">
    <property type="entry name" value="Cytochrome Bc1 Complex, Chain C"/>
    <property type="match status" value="1"/>
</dbReference>
<dbReference type="InterPro" id="IPR005798">
    <property type="entry name" value="Cyt_b/b6_C"/>
</dbReference>
<dbReference type="InterPro" id="IPR036150">
    <property type="entry name" value="Cyt_b/b6_C_sf"/>
</dbReference>
<dbReference type="InterPro" id="IPR005797">
    <property type="entry name" value="Cyt_b/b6_N"/>
</dbReference>
<dbReference type="InterPro" id="IPR027387">
    <property type="entry name" value="Cytb/b6-like_sf"/>
</dbReference>
<dbReference type="InterPro" id="IPR030689">
    <property type="entry name" value="Cytochrome_b"/>
</dbReference>
<dbReference type="InterPro" id="IPR048260">
    <property type="entry name" value="Cytochrome_b_C_euk/bac"/>
</dbReference>
<dbReference type="InterPro" id="IPR048259">
    <property type="entry name" value="Cytochrome_b_N_euk/bac"/>
</dbReference>
<dbReference type="InterPro" id="IPR016174">
    <property type="entry name" value="Di-haem_cyt_TM"/>
</dbReference>
<dbReference type="PANTHER" id="PTHR19271">
    <property type="entry name" value="CYTOCHROME B"/>
    <property type="match status" value="1"/>
</dbReference>
<dbReference type="PANTHER" id="PTHR19271:SF16">
    <property type="entry name" value="CYTOCHROME B"/>
    <property type="match status" value="1"/>
</dbReference>
<dbReference type="Pfam" id="PF00032">
    <property type="entry name" value="Cytochrom_B_C"/>
    <property type="match status" value="1"/>
</dbReference>
<dbReference type="Pfam" id="PF00033">
    <property type="entry name" value="Cytochrome_B"/>
    <property type="match status" value="1"/>
</dbReference>
<dbReference type="PIRSF" id="PIRSF038885">
    <property type="entry name" value="COB"/>
    <property type="match status" value="1"/>
</dbReference>
<dbReference type="SUPFAM" id="SSF81648">
    <property type="entry name" value="a domain/subunit of cytochrome bc1 complex (Ubiquinol-cytochrome c reductase)"/>
    <property type="match status" value="1"/>
</dbReference>
<dbReference type="SUPFAM" id="SSF81342">
    <property type="entry name" value="Transmembrane di-heme cytochromes"/>
    <property type="match status" value="1"/>
</dbReference>
<dbReference type="PROSITE" id="PS51003">
    <property type="entry name" value="CYTB_CTER"/>
    <property type="match status" value="1"/>
</dbReference>
<dbReference type="PROSITE" id="PS51002">
    <property type="entry name" value="CYTB_NTER"/>
    <property type="match status" value="1"/>
</dbReference>
<gene>
    <name type="primary">MT-CYB</name>
    <name type="synonym">COB</name>
    <name type="synonym">CYTB</name>
    <name type="synonym">MTCYB</name>
</gene>